<feature type="signal peptide" evidence="3">
    <location>
        <begin position="1"/>
        <end position="16"/>
    </location>
</feature>
<feature type="chain" id="PRO_0000021257" description="Fibroin light chain">
    <location>
        <begin position="17"/>
        <end position="267"/>
    </location>
</feature>
<feature type="chain" id="PRO_0000389560" description="Fibroin light chain, short form" evidence="1">
    <location>
        <begin position="19"/>
        <end position="267"/>
    </location>
</feature>
<feature type="modified residue" description="N-acetylserine; in short form" evidence="1">
    <location>
        <position position="19"/>
    </location>
</feature>
<feature type="disulfide bond" evidence="2">
    <location>
        <begin position="103"/>
        <end position="162"/>
    </location>
</feature>
<feature type="disulfide bond" description="Interchain (with heavy chain)" evidence="1">
    <location>
        <position position="195"/>
    </location>
</feature>
<feature type="sequence conflict" description="In Ref. 1; AA sequence." evidence="4" ref="1">
    <original>Q</original>
    <variation>E</variation>
    <location>
        <position position="24"/>
    </location>
</feature>
<keyword id="KW-0007">Acetylation</keyword>
<keyword id="KW-0903">Direct protein sequencing</keyword>
<keyword id="KW-1015">Disulfide bond</keyword>
<keyword id="KW-1185">Reference proteome</keyword>
<keyword id="KW-0964">Secreted</keyword>
<keyword id="KW-0732">Signal</keyword>
<keyword id="KW-0737">Silk protein</keyword>
<comment type="function">
    <text evidence="1">It is likely that the major role of L-chain is to prevent the retention of H-chain in ER by forming the disulfide linkage.</text>
</comment>
<comment type="subunit">
    <text>Silk fibroin elementary unit consists in a disulfide-linked heavy and light chain and a p25 glycoprotein in molar ratios of 6:6:1. This results in a complex of approximately 2.3 MDa.</text>
</comment>
<comment type="subcellular location">
    <subcellularLocation>
        <location>Secreted</location>
    </subcellularLocation>
</comment>
<comment type="tissue specificity">
    <text>Produced exclusively in the posterior (PSG) section of silk glands, which are essentially modified salivary glands.</text>
</comment>
<comment type="developmental stage">
    <text>Expressed in the posterior silk glands throughout the penultimate and last larval instars. Declines in immobile pupae and disappears within the next 12 hours when insects pupate.</text>
</comment>
<comment type="PTM">
    <text evidence="1">Partially N-terminally processed to yield a short form which lacks the first two residues of the long form.</text>
</comment>
<comment type="PTM">
    <text evidence="1">The interchain disulfide bridge is essential for the intracellular transport and secretion of fibroin.</text>
</comment>
<reference key="1">
    <citation type="journal article" date="1995" name="Mol. Gen. Genet.">
        <title>Light-chain fibroin of Galleria mellonella L.</title>
        <authorList>
            <person name="Zurovec M."/>
            <person name="Vaskova M."/>
            <person name="Kodrik D."/>
            <person name="Sehnal F."/>
            <person name="Kumaran A.K."/>
        </authorList>
    </citation>
    <scope>NUCLEOTIDE SEQUENCE [MRNA]</scope>
    <scope>PROTEIN SEQUENCE OF 17-27</scope>
    <source>
        <tissue>Posterior silk gland</tissue>
    </source>
</reference>
<name>FIBL_GALME</name>
<protein>
    <recommendedName>
        <fullName>Fibroin light chain</fullName>
        <shortName>Fib-L</shortName>
    </recommendedName>
    <alternativeName>
        <fullName>L-fibroin</fullName>
    </alternativeName>
    <alternativeName>
        <fullName>PG-1</fullName>
    </alternativeName>
    <component>
        <recommendedName>
            <fullName>Fibroin light chain, short form</fullName>
        </recommendedName>
    </component>
</protein>
<gene>
    <name type="primary">FIBL</name>
</gene>
<accession>Q26427</accession>
<organism>
    <name type="scientific">Galleria mellonella</name>
    <name type="common">Greater wax moth</name>
    <dbReference type="NCBI Taxonomy" id="7137"/>
    <lineage>
        <taxon>Eukaryota</taxon>
        <taxon>Metazoa</taxon>
        <taxon>Ecdysozoa</taxon>
        <taxon>Arthropoda</taxon>
        <taxon>Hexapoda</taxon>
        <taxon>Insecta</taxon>
        <taxon>Pterygota</taxon>
        <taxon>Neoptera</taxon>
        <taxon>Endopterygota</taxon>
        <taxon>Lepidoptera</taxon>
        <taxon>Glossata</taxon>
        <taxon>Ditrysia</taxon>
        <taxon>Pyraloidea</taxon>
        <taxon>Pyralidae</taxon>
        <taxon>Galleriinae</taxon>
        <taxon>Galleria</taxon>
    </lineage>
</organism>
<proteinExistence type="evidence at protein level"/>
<dbReference type="EMBL" id="S77817">
    <property type="protein sequence ID" value="AAB34044.1"/>
    <property type="molecule type" value="mRNA"/>
</dbReference>
<dbReference type="PIR" id="S54713">
    <property type="entry name" value="S54713"/>
</dbReference>
<dbReference type="InParanoid" id="Q26427"/>
<dbReference type="Proteomes" id="UP000504614">
    <property type="component" value="Unplaced"/>
</dbReference>
<dbReference type="GO" id="GO:0005576">
    <property type="term" value="C:extracellular region"/>
    <property type="evidence" value="ECO:0007669"/>
    <property type="project" value="UniProtKB-SubCell"/>
</dbReference>
<dbReference type="InterPro" id="IPR008660">
    <property type="entry name" value="L-fibroin"/>
</dbReference>
<dbReference type="Pfam" id="PF05849">
    <property type="entry name" value="L-fibroin"/>
    <property type="match status" value="1"/>
</dbReference>
<dbReference type="PIRSF" id="PIRSF005765">
    <property type="entry name" value="L-fibroin"/>
    <property type="match status" value="1"/>
</dbReference>
<sequence length="267" mass="27079">MLPFVLVLLVATSALAAPSVVISQDNINNIAPRVGNGRPISSALIDRAFEIVDGGDTNIYILTIQQILNDLADQPDGLSQSLAVTQAVAALGELATGVPGNSCEAAAVIDAYANSVRTGDNSALSIAVANYINRLSSNIGLISQLASNPDSLRYSSGPAGNCAGGGRSYQFEAAWDAVLNNANPYQIGLINEEYCAARRLYNAFNSRSNNVGAAITAGAVVAQTQAAQIILPSLVNVLSAVAAGGNVAGAAAQAGQALANAAANVQL</sequence>
<evidence type="ECO:0000250" key="1"/>
<evidence type="ECO:0000255" key="2"/>
<evidence type="ECO:0000269" key="3">
    <source>
    </source>
</evidence>
<evidence type="ECO:0000305" key="4"/>